<sequence>MAKVLVLYYSMYGHIETMARAVAEGASKVDGAEVVVKRVPETMPPQLFEKAGGKTQTAPVATPQELADYDAIIFGTPTRFGNMSGQMRTFLDQTGGLWASGALYGKLASVFSSTGTGGGQEQTITSTWTTLAHHGMVIVPIGYAAQELFDVSQVRGGTPYGATTIAGGDGSRQPSQEELSIARYQGEYVAGLAVKLNG</sequence>
<name>NQOR_SHIFL</name>
<gene>
    <name type="ordered locus">SF1008</name>
    <name type="ordered locus">S1077</name>
</gene>
<reference key="1">
    <citation type="journal article" date="2002" name="Nucleic Acids Res.">
        <title>Genome sequence of Shigella flexneri 2a: insights into pathogenicity through comparison with genomes of Escherichia coli K12 and O157.</title>
        <authorList>
            <person name="Jin Q."/>
            <person name="Yuan Z."/>
            <person name="Xu J."/>
            <person name="Wang Y."/>
            <person name="Shen Y."/>
            <person name="Lu W."/>
            <person name="Wang J."/>
            <person name="Liu H."/>
            <person name="Yang J."/>
            <person name="Yang F."/>
            <person name="Zhang X."/>
            <person name="Zhang J."/>
            <person name="Yang G."/>
            <person name="Wu H."/>
            <person name="Qu D."/>
            <person name="Dong J."/>
            <person name="Sun L."/>
            <person name="Xue Y."/>
            <person name="Zhao A."/>
            <person name="Gao Y."/>
            <person name="Zhu J."/>
            <person name="Kan B."/>
            <person name="Ding K."/>
            <person name="Chen S."/>
            <person name="Cheng H."/>
            <person name="Yao Z."/>
            <person name="He B."/>
            <person name="Chen R."/>
            <person name="Ma D."/>
            <person name="Qiang B."/>
            <person name="Wen Y."/>
            <person name="Hou Y."/>
            <person name="Yu J."/>
        </authorList>
    </citation>
    <scope>NUCLEOTIDE SEQUENCE [LARGE SCALE GENOMIC DNA]</scope>
    <source>
        <strain>301 / Serotype 2a</strain>
    </source>
</reference>
<reference key="2">
    <citation type="journal article" date="2003" name="Infect. Immun.">
        <title>Complete genome sequence and comparative genomics of Shigella flexneri serotype 2a strain 2457T.</title>
        <authorList>
            <person name="Wei J."/>
            <person name="Goldberg M.B."/>
            <person name="Burland V."/>
            <person name="Venkatesan M.M."/>
            <person name="Deng W."/>
            <person name="Fournier G."/>
            <person name="Mayhew G.F."/>
            <person name="Plunkett G. III"/>
            <person name="Rose D.J."/>
            <person name="Darling A."/>
            <person name="Mau B."/>
            <person name="Perna N.T."/>
            <person name="Payne S.M."/>
            <person name="Runyen-Janecky L.J."/>
            <person name="Zhou S."/>
            <person name="Schwartz D.C."/>
            <person name="Blattner F.R."/>
        </authorList>
    </citation>
    <scope>NUCLEOTIDE SEQUENCE [LARGE SCALE GENOMIC DNA]</scope>
    <source>
        <strain>ATCC 700930 / 2457T / Serotype 2a</strain>
    </source>
</reference>
<protein>
    <recommendedName>
        <fullName evidence="2">NAD(P)H dehydrogenase (quinone)</fullName>
        <ecNumber evidence="2">1.6.5.2</ecNumber>
    </recommendedName>
    <alternativeName>
        <fullName>Flavoprotein WrbA</fullName>
    </alternativeName>
    <alternativeName>
        <fullName evidence="2">NAD(P)H:quinone oxidoreductase</fullName>
        <shortName evidence="2">NQO</shortName>
    </alternativeName>
</protein>
<keyword id="KW-0285">Flavoprotein</keyword>
<keyword id="KW-0288">FMN</keyword>
<keyword id="KW-0520">NAD</keyword>
<keyword id="KW-0521">NADP</keyword>
<keyword id="KW-0547">Nucleotide-binding</keyword>
<keyword id="KW-0560">Oxidoreductase</keyword>
<keyword id="KW-1185">Reference proteome</keyword>
<dbReference type="EC" id="1.6.5.2" evidence="2"/>
<dbReference type="EMBL" id="AE005674">
    <property type="protein sequence ID" value="AAN42634.1"/>
    <property type="molecule type" value="Genomic_DNA"/>
</dbReference>
<dbReference type="EMBL" id="AE014073">
    <property type="protein sequence ID" value="AAP16518.1"/>
    <property type="molecule type" value="Genomic_DNA"/>
</dbReference>
<dbReference type="SMR" id="P0A8G8"/>
<dbReference type="STRING" id="198214.SF1008"/>
<dbReference type="PaxDb" id="198214-SF1008"/>
<dbReference type="KEGG" id="sfl:SF1008"/>
<dbReference type="KEGG" id="sfx:S1077"/>
<dbReference type="PATRIC" id="fig|198214.7.peg.1172"/>
<dbReference type="HOGENOM" id="CLU_051402_0_2_6"/>
<dbReference type="Proteomes" id="UP000001006">
    <property type="component" value="Chromosome"/>
</dbReference>
<dbReference type="Proteomes" id="UP000002673">
    <property type="component" value="Chromosome"/>
</dbReference>
<dbReference type="GO" id="GO:0016020">
    <property type="term" value="C:membrane"/>
    <property type="evidence" value="ECO:0007669"/>
    <property type="project" value="TreeGrafter"/>
</dbReference>
<dbReference type="GO" id="GO:0050660">
    <property type="term" value="F:flavin adenine dinucleotide binding"/>
    <property type="evidence" value="ECO:0007669"/>
    <property type="project" value="UniProtKB-UniRule"/>
</dbReference>
<dbReference type="GO" id="GO:0010181">
    <property type="term" value="F:FMN binding"/>
    <property type="evidence" value="ECO:0007669"/>
    <property type="project" value="InterPro"/>
</dbReference>
<dbReference type="GO" id="GO:0051287">
    <property type="term" value="F:NAD binding"/>
    <property type="evidence" value="ECO:0007669"/>
    <property type="project" value="UniProtKB-UniRule"/>
</dbReference>
<dbReference type="GO" id="GO:0050136">
    <property type="term" value="F:NADH:ubiquinone reductase (non-electrogenic) activity"/>
    <property type="evidence" value="ECO:0007669"/>
    <property type="project" value="RHEA"/>
</dbReference>
<dbReference type="GO" id="GO:0050661">
    <property type="term" value="F:NADP binding"/>
    <property type="evidence" value="ECO:0007669"/>
    <property type="project" value="UniProtKB-UniRule"/>
</dbReference>
<dbReference type="GO" id="GO:0008753">
    <property type="term" value="F:NADPH dehydrogenase (quinone) activity"/>
    <property type="evidence" value="ECO:0007669"/>
    <property type="project" value="RHEA"/>
</dbReference>
<dbReference type="FunFam" id="3.40.50.360:FF:000004">
    <property type="entry name" value="NAD(P)H dehydrogenase (quinone)"/>
    <property type="match status" value="1"/>
</dbReference>
<dbReference type="Gene3D" id="3.40.50.360">
    <property type="match status" value="1"/>
</dbReference>
<dbReference type="HAMAP" id="MF_01017">
    <property type="entry name" value="NQOR"/>
    <property type="match status" value="1"/>
</dbReference>
<dbReference type="InterPro" id="IPR008254">
    <property type="entry name" value="Flavodoxin/NO_synth"/>
</dbReference>
<dbReference type="InterPro" id="IPR029039">
    <property type="entry name" value="Flavoprotein-like_sf"/>
</dbReference>
<dbReference type="InterPro" id="IPR010089">
    <property type="entry name" value="Flavoprotein_WrbA-like"/>
</dbReference>
<dbReference type="InterPro" id="IPR005025">
    <property type="entry name" value="FMN_Rdtase-like_dom"/>
</dbReference>
<dbReference type="InterPro" id="IPR037513">
    <property type="entry name" value="NQO"/>
</dbReference>
<dbReference type="NCBIfam" id="TIGR01755">
    <property type="entry name" value="flav_wrbA"/>
    <property type="match status" value="1"/>
</dbReference>
<dbReference type="NCBIfam" id="NF002999">
    <property type="entry name" value="PRK03767.1"/>
    <property type="match status" value="1"/>
</dbReference>
<dbReference type="PANTHER" id="PTHR30546">
    <property type="entry name" value="FLAVODOXIN-RELATED PROTEIN WRBA-RELATED"/>
    <property type="match status" value="1"/>
</dbReference>
<dbReference type="PANTHER" id="PTHR30546:SF23">
    <property type="entry name" value="FLAVOPROTEIN-LIKE PROTEIN YCP4-RELATED"/>
    <property type="match status" value="1"/>
</dbReference>
<dbReference type="Pfam" id="PF03358">
    <property type="entry name" value="FMN_red"/>
    <property type="match status" value="1"/>
</dbReference>
<dbReference type="SUPFAM" id="SSF52218">
    <property type="entry name" value="Flavoproteins"/>
    <property type="match status" value="1"/>
</dbReference>
<dbReference type="PROSITE" id="PS50902">
    <property type="entry name" value="FLAVODOXIN_LIKE"/>
    <property type="match status" value="1"/>
</dbReference>
<accession>P0A8G8</accession>
<accession>P30849</accession>
<accession>P75890</accession>
<accession>P77543</accession>
<comment type="catalytic activity">
    <reaction evidence="2">
        <text>a quinone + NADH + H(+) = a quinol + NAD(+)</text>
        <dbReference type="Rhea" id="RHEA:46160"/>
        <dbReference type="ChEBI" id="CHEBI:15378"/>
        <dbReference type="ChEBI" id="CHEBI:24646"/>
        <dbReference type="ChEBI" id="CHEBI:57540"/>
        <dbReference type="ChEBI" id="CHEBI:57945"/>
        <dbReference type="ChEBI" id="CHEBI:132124"/>
        <dbReference type="EC" id="1.6.5.2"/>
    </reaction>
</comment>
<comment type="catalytic activity">
    <reaction evidence="2">
        <text>a quinone + NADPH + H(+) = a quinol + NADP(+)</text>
        <dbReference type="Rhea" id="RHEA:46164"/>
        <dbReference type="ChEBI" id="CHEBI:15378"/>
        <dbReference type="ChEBI" id="CHEBI:24646"/>
        <dbReference type="ChEBI" id="CHEBI:57783"/>
        <dbReference type="ChEBI" id="CHEBI:58349"/>
        <dbReference type="ChEBI" id="CHEBI:132124"/>
        <dbReference type="EC" id="1.6.5.2"/>
    </reaction>
</comment>
<comment type="cofactor">
    <cofactor evidence="2">
        <name>FMN</name>
        <dbReference type="ChEBI" id="CHEBI:58210"/>
    </cofactor>
    <text evidence="2">Binds 1 FMN per monomer.</text>
</comment>
<comment type="similarity">
    <text evidence="2">Belongs to the WrbA family.</text>
</comment>
<organism>
    <name type="scientific">Shigella flexneri</name>
    <dbReference type="NCBI Taxonomy" id="623"/>
    <lineage>
        <taxon>Bacteria</taxon>
        <taxon>Pseudomonadati</taxon>
        <taxon>Pseudomonadota</taxon>
        <taxon>Gammaproteobacteria</taxon>
        <taxon>Enterobacterales</taxon>
        <taxon>Enterobacteriaceae</taxon>
        <taxon>Shigella</taxon>
    </lineage>
</organism>
<feature type="initiator methionine" description="Removed" evidence="1">
    <location>
        <position position="1"/>
    </location>
</feature>
<feature type="chain" id="PRO_0000200758" description="NAD(P)H dehydrogenase (quinone)">
    <location>
        <begin position="2"/>
        <end position="198"/>
    </location>
</feature>
<feature type="domain" description="Flavodoxin-like" evidence="2">
    <location>
        <begin position="4"/>
        <end position="189"/>
    </location>
</feature>
<feature type="binding site" evidence="2">
    <location>
        <begin position="10"/>
        <end position="15"/>
    </location>
    <ligand>
        <name>FMN</name>
        <dbReference type="ChEBI" id="CHEBI:58210"/>
    </ligand>
</feature>
<feature type="binding site" evidence="2">
    <location>
        <position position="12"/>
    </location>
    <ligand>
        <name>NAD(+)</name>
        <dbReference type="ChEBI" id="CHEBI:57540"/>
    </ligand>
</feature>
<feature type="binding site" evidence="2">
    <location>
        <begin position="78"/>
        <end position="80"/>
    </location>
    <ligand>
        <name>FMN</name>
        <dbReference type="ChEBI" id="CHEBI:58210"/>
    </ligand>
</feature>
<feature type="binding site" evidence="2">
    <location>
        <position position="98"/>
    </location>
    <ligand>
        <name>substrate</name>
    </ligand>
</feature>
<feature type="binding site" evidence="2">
    <location>
        <begin position="113"/>
        <end position="118"/>
    </location>
    <ligand>
        <name>FMN</name>
        <dbReference type="ChEBI" id="CHEBI:58210"/>
    </ligand>
</feature>
<feature type="binding site" evidence="2">
    <location>
        <position position="133"/>
    </location>
    <ligand>
        <name>FMN</name>
        <dbReference type="ChEBI" id="CHEBI:58210"/>
    </ligand>
</feature>
<proteinExistence type="inferred from homology"/>
<evidence type="ECO:0000250" key="1"/>
<evidence type="ECO:0000255" key="2">
    <source>
        <dbReference type="HAMAP-Rule" id="MF_01017"/>
    </source>
</evidence>